<proteinExistence type="inferred from homology"/>
<reference key="1">
    <citation type="journal article" date="2002" name="Nucleic Acids Res.">
        <title>Genome sequence of Shigella flexneri 2a: insights into pathogenicity through comparison with genomes of Escherichia coli K12 and O157.</title>
        <authorList>
            <person name="Jin Q."/>
            <person name="Yuan Z."/>
            <person name="Xu J."/>
            <person name="Wang Y."/>
            <person name="Shen Y."/>
            <person name="Lu W."/>
            <person name="Wang J."/>
            <person name="Liu H."/>
            <person name="Yang J."/>
            <person name="Yang F."/>
            <person name="Zhang X."/>
            <person name="Zhang J."/>
            <person name="Yang G."/>
            <person name="Wu H."/>
            <person name="Qu D."/>
            <person name="Dong J."/>
            <person name="Sun L."/>
            <person name="Xue Y."/>
            <person name="Zhao A."/>
            <person name="Gao Y."/>
            <person name="Zhu J."/>
            <person name="Kan B."/>
            <person name="Ding K."/>
            <person name="Chen S."/>
            <person name="Cheng H."/>
            <person name="Yao Z."/>
            <person name="He B."/>
            <person name="Chen R."/>
            <person name="Ma D."/>
            <person name="Qiang B."/>
            <person name="Wen Y."/>
            <person name="Hou Y."/>
            <person name="Yu J."/>
        </authorList>
    </citation>
    <scope>NUCLEOTIDE SEQUENCE [LARGE SCALE GENOMIC DNA]</scope>
    <source>
        <strain>301 / Serotype 2a</strain>
    </source>
</reference>
<reference key="2">
    <citation type="journal article" date="2003" name="Infect. Immun.">
        <title>Complete genome sequence and comparative genomics of Shigella flexneri serotype 2a strain 2457T.</title>
        <authorList>
            <person name="Wei J."/>
            <person name="Goldberg M.B."/>
            <person name="Burland V."/>
            <person name="Venkatesan M.M."/>
            <person name="Deng W."/>
            <person name="Fournier G."/>
            <person name="Mayhew G.F."/>
            <person name="Plunkett G. III"/>
            <person name="Rose D.J."/>
            <person name="Darling A."/>
            <person name="Mau B."/>
            <person name="Perna N.T."/>
            <person name="Payne S.M."/>
            <person name="Runyen-Janecky L.J."/>
            <person name="Zhou S."/>
            <person name="Schwartz D.C."/>
            <person name="Blattner F.R."/>
        </authorList>
    </citation>
    <scope>NUCLEOTIDE SEQUENCE [LARGE SCALE GENOMIC DNA]</scope>
    <source>
        <strain>ATCC 700930 / 2457T / Serotype 2a</strain>
    </source>
</reference>
<accession>Q83LP1</accession>
<accession>Q7C292</accession>
<dbReference type="EC" id="2.7.4.25" evidence="1"/>
<dbReference type="EMBL" id="AE005674">
    <property type="protein sequence ID" value="AAN42536.1"/>
    <property type="molecule type" value="Genomic_DNA"/>
</dbReference>
<dbReference type="EMBL" id="AE014073">
    <property type="protein sequence ID" value="AAP16422.1"/>
    <property type="molecule type" value="Genomic_DNA"/>
</dbReference>
<dbReference type="RefSeq" id="NP_706829.1">
    <property type="nucleotide sequence ID" value="NC_004337.2"/>
</dbReference>
<dbReference type="RefSeq" id="WP_000125013.1">
    <property type="nucleotide sequence ID" value="NZ_WPGW01000072.1"/>
</dbReference>
<dbReference type="SMR" id="Q83LP1"/>
<dbReference type="STRING" id="198214.SF0906"/>
<dbReference type="PaxDb" id="198214-SF0906"/>
<dbReference type="GeneID" id="1023896"/>
<dbReference type="KEGG" id="sfl:SF0906"/>
<dbReference type="KEGG" id="sfx:S0970"/>
<dbReference type="PATRIC" id="fig|198214.7.peg.1055"/>
<dbReference type="HOGENOM" id="CLU_079959_0_2_6"/>
<dbReference type="Proteomes" id="UP000001006">
    <property type="component" value="Chromosome"/>
</dbReference>
<dbReference type="Proteomes" id="UP000002673">
    <property type="component" value="Chromosome"/>
</dbReference>
<dbReference type="GO" id="GO:0005829">
    <property type="term" value="C:cytosol"/>
    <property type="evidence" value="ECO:0007669"/>
    <property type="project" value="TreeGrafter"/>
</dbReference>
<dbReference type="GO" id="GO:0005524">
    <property type="term" value="F:ATP binding"/>
    <property type="evidence" value="ECO:0007669"/>
    <property type="project" value="UniProtKB-UniRule"/>
</dbReference>
<dbReference type="GO" id="GO:0036430">
    <property type="term" value="F:CMP kinase activity"/>
    <property type="evidence" value="ECO:0007669"/>
    <property type="project" value="RHEA"/>
</dbReference>
<dbReference type="GO" id="GO:0036431">
    <property type="term" value="F:dCMP kinase activity"/>
    <property type="evidence" value="ECO:0007669"/>
    <property type="project" value="RHEA"/>
</dbReference>
<dbReference type="GO" id="GO:0015949">
    <property type="term" value="P:nucleobase-containing small molecule interconversion"/>
    <property type="evidence" value="ECO:0007669"/>
    <property type="project" value="TreeGrafter"/>
</dbReference>
<dbReference type="GO" id="GO:0006220">
    <property type="term" value="P:pyrimidine nucleotide metabolic process"/>
    <property type="evidence" value="ECO:0007669"/>
    <property type="project" value="UniProtKB-UniRule"/>
</dbReference>
<dbReference type="CDD" id="cd02020">
    <property type="entry name" value="CMPK"/>
    <property type="match status" value="1"/>
</dbReference>
<dbReference type="FunFam" id="3.40.50.300:FF:000262">
    <property type="entry name" value="Cytidylate kinase"/>
    <property type="match status" value="1"/>
</dbReference>
<dbReference type="Gene3D" id="3.40.50.300">
    <property type="entry name" value="P-loop containing nucleotide triphosphate hydrolases"/>
    <property type="match status" value="1"/>
</dbReference>
<dbReference type="HAMAP" id="MF_00238">
    <property type="entry name" value="Cytidyl_kinase_type1"/>
    <property type="match status" value="1"/>
</dbReference>
<dbReference type="InterPro" id="IPR003136">
    <property type="entry name" value="Cytidylate_kin"/>
</dbReference>
<dbReference type="InterPro" id="IPR011994">
    <property type="entry name" value="Cytidylate_kinase_dom"/>
</dbReference>
<dbReference type="InterPro" id="IPR027417">
    <property type="entry name" value="P-loop_NTPase"/>
</dbReference>
<dbReference type="NCBIfam" id="TIGR00017">
    <property type="entry name" value="cmk"/>
    <property type="match status" value="1"/>
</dbReference>
<dbReference type="PANTHER" id="PTHR21299:SF2">
    <property type="entry name" value="CYTIDYLATE KINASE"/>
    <property type="match status" value="1"/>
</dbReference>
<dbReference type="PANTHER" id="PTHR21299">
    <property type="entry name" value="CYTIDYLATE KINASE/PANTOATE-BETA-ALANINE LIGASE"/>
    <property type="match status" value="1"/>
</dbReference>
<dbReference type="Pfam" id="PF02224">
    <property type="entry name" value="Cytidylate_kin"/>
    <property type="match status" value="1"/>
</dbReference>
<dbReference type="SUPFAM" id="SSF52540">
    <property type="entry name" value="P-loop containing nucleoside triphosphate hydrolases"/>
    <property type="match status" value="1"/>
</dbReference>
<feature type="chain" id="PRO_0000131971" description="Cytidylate kinase">
    <location>
        <begin position="1"/>
        <end position="227"/>
    </location>
</feature>
<feature type="binding site" evidence="1">
    <location>
        <begin position="12"/>
        <end position="20"/>
    </location>
    <ligand>
        <name>ATP</name>
        <dbReference type="ChEBI" id="CHEBI:30616"/>
    </ligand>
</feature>
<gene>
    <name evidence="1" type="primary">cmk</name>
    <name type="ordered locus">SF0906</name>
    <name type="ordered locus">S0970</name>
</gene>
<name>KCY_SHIFL</name>
<comment type="catalytic activity">
    <reaction evidence="1">
        <text>CMP + ATP = CDP + ADP</text>
        <dbReference type="Rhea" id="RHEA:11600"/>
        <dbReference type="ChEBI" id="CHEBI:30616"/>
        <dbReference type="ChEBI" id="CHEBI:58069"/>
        <dbReference type="ChEBI" id="CHEBI:60377"/>
        <dbReference type="ChEBI" id="CHEBI:456216"/>
        <dbReference type="EC" id="2.7.4.25"/>
    </reaction>
</comment>
<comment type="catalytic activity">
    <reaction evidence="1">
        <text>dCMP + ATP = dCDP + ADP</text>
        <dbReference type="Rhea" id="RHEA:25094"/>
        <dbReference type="ChEBI" id="CHEBI:30616"/>
        <dbReference type="ChEBI" id="CHEBI:57566"/>
        <dbReference type="ChEBI" id="CHEBI:58593"/>
        <dbReference type="ChEBI" id="CHEBI:456216"/>
        <dbReference type="EC" id="2.7.4.25"/>
    </reaction>
</comment>
<comment type="subcellular location">
    <subcellularLocation>
        <location evidence="1">Cytoplasm</location>
    </subcellularLocation>
</comment>
<comment type="similarity">
    <text evidence="1">Belongs to the cytidylate kinase family. Type 1 subfamily.</text>
</comment>
<protein>
    <recommendedName>
        <fullName evidence="1">Cytidylate kinase</fullName>
        <shortName evidence="1">CK</shortName>
        <ecNumber evidence="1">2.7.4.25</ecNumber>
    </recommendedName>
    <alternativeName>
        <fullName evidence="1">Cytidine monophosphate kinase</fullName>
        <shortName evidence="1">CMP kinase</shortName>
    </alternativeName>
</protein>
<sequence>MTAIAPVITIDGPSGAGKGTLCKAMAEALQWHLLDSGAIYRVLALAALHHHVDVASEDALVPLASHLDVRFVSTNGNLEVILEGEDVSGEIRTQEVANAASQVAAFPRVREALLRRQRAFRELPGLIADGRDMGTVVFPDAPVKIFLDASSEERAHRRMLQLQEKGFSVNFERLLAEIKERDDRDRNRAVAPLVPAADALVLDSTTLSIEQLIEKALQYARQKLALA</sequence>
<evidence type="ECO:0000255" key="1">
    <source>
        <dbReference type="HAMAP-Rule" id="MF_00238"/>
    </source>
</evidence>
<keyword id="KW-0067">ATP-binding</keyword>
<keyword id="KW-0963">Cytoplasm</keyword>
<keyword id="KW-0418">Kinase</keyword>
<keyword id="KW-0547">Nucleotide-binding</keyword>
<keyword id="KW-1185">Reference proteome</keyword>
<keyword id="KW-0808">Transferase</keyword>
<organism>
    <name type="scientific">Shigella flexneri</name>
    <dbReference type="NCBI Taxonomy" id="623"/>
    <lineage>
        <taxon>Bacteria</taxon>
        <taxon>Pseudomonadati</taxon>
        <taxon>Pseudomonadota</taxon>
        <taxon>Gammaproteobacteria</taxon>
        <taxon>Enterobacterales</taxon>
        <taxon>Enterobacteriaceae</taxon>
        <taxon>Shigella</taxon>
    </lineage>
</organism>